<organism>
    <name type="scientific">Macrotus californicus</name>
    <name type="common">Californian leaf-nosed bat</name>
    <dbReference type="NCBI Taxonomy" id="9419"/>
    <lineage>
        <taxon>Eukaryota</taxon>
        <taxon>Metazoa</taxon>
        <taxon>Chordata</taxon>
        <taxon>Craniata</taxon>
        <taxon>Vertebrata</taxon>
        <taxon>Euteleostomi</taxon>
        <taxon>Mammalia</taxon>
        <taxon>Eutheria</taxon>
        <taxon>Laurasiatheria</taxon>
        <taxon>Chiroptera</taxon>
        <taxon>Yangochiroptera</taxon>
        <taxon>Phyllostomidae</taxon>
        <taxon>Phyllostominae</taxon>
        <taxon>Macrotus</taxon>
    </lineage>
</organism>
<keyword id="KW-0007">Acetylation</keyword>
<keyword id="KW-0903">Direct protein sequencing</keyword>
<keyword id="KW-0349">Heme</keyword>
<keyword id="KW-0408">Iron</keyword>
<keyword id="KW-0479">Metal-binding</keyword>
<keyword id="KW-0561">Oxygen transport</keyword>
<keyword id="KW-0597">Phosphoprotein</keyword>
<keyword id="KW-0813">Transport</keyword>
<sequence>VLSAADKGNVKAAWDKVGGQAGEYGAEALERMFLSFPTTKTYFPHFDLAHGSAQVKGHGKKVADALTNAVGHMDDLPGALSALSDLHAYKLRVDPVNFKLLSHCLLVTLASHHPAEFTPAIHASLDKFFASVSTVLTSKYR</sequence>
<feature type="chain" id="PRO_0000052673" description="Hemoglobin subunit alpha">
    <location>
        <begin position="1"/>
        <end position="141"/>
    </location>
</feature>
<feature type="peptide" id="PRO_0000455894" description="Hemopressin" evidence="2">
    <location>
        <begin position="95"/>
        <end position="103"/>
    </location>
</feature>
<feature type="domain" description="Globin" evidence="4">
    <location>
        <begin position="1"/>
        <end position="141"/>
    </location>
</feature>
<feature type="binding site" evidence="4">
    <location>
        <position position="58"/>
    </location>
    <ligand>
        <name>O2</name>
        <dbReference type="ChEBI" id="CHEBI:15379"/>
    </ligand>
</feature>
<feature type="binding site" description="proximal binding residue" evidence="4">
    <location>
        <position position="87"/>
    </location>
    <ligand>
        <name>heme b</name>
        <dbReference type="ChEBI" id="CHEBI:60344"/>
    </ligand>
    <ligandPart>
        <name>Fe</name>
        <dbReference type="ChEBI" id="CHEBI:18248"/>
    </ligandPart>
</feature>
<feature type="modified residue" description="Phosphoserine" evidence="3">
    <location>
        <position position="3"/>
    </location>
</feature>
<feature type="modified residue" description="N6-succinyllysine" evidence="1">
    <location>
        <position position="7"/>
    </location>
</feature>
<feature type="modified residue" description="N6-succinyllysine" evidence="1">
    <location>
        <position position="11"/>
    </location>
</feature>
<feature type="modified residue" description="N6-acetyllysine; alternate" evidence="3">
    <location>
        <position position="16"/>
    </location>
</feature>
<feature type="modified residue" description="N6-succinyllysine; alternate" evidence="1">
    <location>
        <position position="16"/>
    </location>
</feature>
<feature type="modified residue" description="Phosphotyrosine" evidence="3">
    <location>
        <position position="24"/>
    </location>
</feature>
<feature type="modified residue" description="Phosphoserine" evidence="3">
    <location>
        <position position="35"/>
    </location>
</feature>
<feature type="modified residue" description="N6-succinyllysine" evidence="1">
    <location>
        <position position="40"/>
    </location>
</feature>
<feature type="modified residue" description="Phosphoserine" evidence="1">
    <location>
        <position position="102"/>
    </location>
</feature>
<feature type="modified residue" description="Phosphothreonine" evidence="1">
    <location>
        <position position="108"/>
    </location>
</feature>
<feature type="modified residue" description="Phosphoserine" evidence="1">
    <location>
        <position position="124"/>
    </location>
</feature>
<feature type="modified residue" description="Phosphoserine" evidence="1">
    <location>
        <position position="131"/>
    </location>
</feature>
<feature type="modified residue" description="Phosphothreonine" evidence="1">
    <location>
        <position position="134"/>
    </location>
</feature>
<feature type="modified residue" description="Phosphothreonine" evidence="1">
    <location>
        <position position="137"/>
    </location>
</feature>
<feature type="modified residue" description="Phosphoserine" evidence="1">
    <location>
        <position position="138"/>
    </location>
</feature>
<comment type="function">
    <text>Involved in oxygen transport from the lung to the various peripheral tissues.</text>
</comment>
<comment type="function">
    <molecule>Hemopressin</molecule>
    <text evidence="2">Hemopressin acts as an antagonist peptide of the cannabinoid receptor CNR1. Hemopressin-binding efficiently blocks cannabinoid receptor CNR1 and subsequent signaling.</text>
</comment>
<comment type="subunit">
    <text>Heterotetramer of two alpha chains and two beta chains.</text>
</comment>
<comment type="tissue specificity">
    <text>Red blood cells.</text>
</comment>
<comment type="similarity">
    <text evidence="4">Belongs to the globin family.</text>
</comment>
<dbReference type="PIR" id="A26640">
    <property type="entry name" value="A26640"/>
</dbReference>
<dbReference type="SMR" id="P09839"/>
<dbReference type="GO" id="GO:0072562">
    <property type="term" value="C:blood microparticle"/>
    <property type="evidence" value="ECO:0007669"/>
    <property type="project" value="TreeGrafter"/>
</dbReference>
<dbReference type="GO" id="GO:0031838">
    <property type="term" value="C:haptoglobin-hemoglobin complex"/>
    <property type="evidence" value="ECO:0007669"/>
    <property type="project" value="TreeGrafter"/>
</dbReference>
<dbReference type="GO" id="GO:0005833">
    <property type="term" value="C:hemoglobin complex"/>
    <property type="evidence" value="ECO:0007669"/>
    <property type="project" value="InterPro"/>
</dbReference>
<dbReference type="GO" id="GO:0031720">
    <property type="term" value="F:haptoglobin binding"/>
    <property type="evidence" value="ECO:0007669"/>
    <property type="project" value="TreeGrafter"/>
</dbReference>
<dbReference type="GO" id="GO:0020037">
    <property type="term" value="F:heme binding"/>
    <property type="evidence" value="ECO:0007669"/>
    <property type="project" value="InterPro"/>
</dbReference>
<dbReference type="GO" id="GO:0005506">
    <property type="term" value="F:iron ion binding"/>
    <property type="evidence" value="ECO:0007669"/>
    <property type="project" value="InterPro"/>
</dbReference>
<dbReference type="GO" id="GO:0043177">
    <property type="term" value="F:organic acid binding"/>
    <property type="evidence" value="ECO:0007669"/>
    <property type="project" value="TreeGrafter"/>
</dbReference>
<dbReference type="GO" id="GO:0019825">
    <property type="term" value="F:oxygen binding"/>
    <property type="evidence" value="ECO:0007669"/>
    <property type="project" value="InterPro"/>
</dbReference>
<dbReference type="GO" id="GO:0005344">
    <property type="term" value="F:oxygen carrier activity"/>
    <property type="evidence" value="ECO:0007669"/>
    <property type="project" value="UniProtKB-KW"/>
</dbReference>
<dbReference type="GO" id="GO:0004601">
    <property type="term" value="F:peroxidase activity"/>
    <property type="evidence" value="ECO:0007669"/>
    <property type="project" value="TreeGrafter"/>
</dbReference>
<dbReference type="GO" id="GO:0042744">
    <property type="term" value="P:hydrogen peroxide catabolic process"/>
    <property type="evidence" value="ECO:0007669"/>
    <property type="project" value="TreeGrafter"/>
</dbReference>
<dbReference type="CDD" id="cd08927">
    <property type="entry name" value="Hb-alpha-like"/>
    <property type="match status" value="1"/>
</dbReference>
<dbReference type="FunFam" id="1.10.490.10:FF:000002">
    <property type="entry name" value="Hemoglobin subunit alpha"/>
    <property type="match status" value="1"/>
</dbReference>
<dbReference type="Gene3D" id="1.10.490.10">
    <property type="entry name" value="Globins"/>
    <property type="match status" value="1"/>
</dbReference>
<dbReference type="InterPro" id="IPR000971">
    <property type="entry name" value="Globin"/>
</dbReference>
<dbReference type="InterPro" id="IPR009050">
    <property type="entry name" value="Globin-like_sf"/>
</dbReference>
<dbReference type="InterPro" id="IPR012292">
    <property type="entry name" value="Globin/Proto"/>
</dbReference>
<dbReference type="InterPro" id="IPR002338">
    <property type="entry name" value="Hemoglobin_a-typ"/>
</dbReference>
<dbReference type="InterPro" id="IPR050056">
    <property type="entry name" value="Hemoglobin_oxygen_transport"/>
</dbReference>
<dbReference type="InterPro" id="IPR002339">
    <property type="entry name" value="Hemoglobin_pi"/>
</dbReference>
<dbReference type="PANTHER" id="PTHR11442">
    <property type="entry name" value="HEMOGLOBIN FAMILY MEMBER"/>
    <property type="match status" value="1"/>
</dbReference>
<dbReference type="PANTHER" id="PTHR11442:SF48">
    <property type="entry name" value="HEMOGLOBIN SUBUNIT ALPHA"/>
    <property type="match status" value="1"/>
</dbReference>
<dbReference type="Pfam" id="PF00042">
    <property type="entry name" value="Globin"/>
    <property type="match status" value="1"/>
</dbReference>
<dbReference type="PRINTS" id="PR00612">
    <property type="entry name" value="ALPHAHAEM"/>
</dbReference>
<dbReference type="PRINTS" id="PR00815">
    <property type="entry name" value="PIHAEM"/>
</dbReference>
<dbReference type="SUPFAM" id="SSF46458">
    <property type="entry name" value="Globin-like"/>
    <property type="match status" value="1"/>
</dbReference>
<dbReference type="PROSITE" id="PS01033">
    <property type="entry name" value="GLOBIN"/>
    <property type="match status" value="1"/>
</dbReference>
<accession>P09839</accession>
<gene>
    <name type="primary">HBA</name>
</gene>
<protein>
    <recommendedName>
        <fullName>Hemoglobin subunit alpha</fullName>
    </recommendedName>
    <alternativeName>
        <fullName>Alpha-globin</fullName>
    </alternativeName>
    <alternativeName>
        <fullName>Hemoglobin alpha chain</fullName>
    </alternativeName>
    <component>
        <recommendedName>
            <fullName evidence="2">Hemopressin</fullName>
        </recommendedName>
    </component>
</protein>
<proteinExistence type="evidence at protein level"/>
<evidence type="ECO:0000250" key="1">
    <source>
        <dbReference type="UniProtKB" id="P01942"/>
    </source>
</evidence>
<evidence type="ECO:0000250" key="2">
    <source>
        <dbReference type="UniProtKB" id="P01946"/>
    </source>
</evidence>
<evidence type="ECO:0000250" key="3">
    <source>
        <dbReference type="UniProtKB" id="P69905"/>
    </source>
</evidence>
<evidence type="ECO:0000255" key="4">
    <source>
        <dbReference type="PROSITE-ProRule" id="PRU00238"/>
    </source>
</evidence>
<reference key="1">
    <citation type="journal article" date="1987" name="Biol. Chem. Hoppe-Seyler">
        <title>The primary structure of the hemoglobin from the bat Macrotus californicus (Chiroptera).</title>
        <authorList>
            <person name="Soskic V."/>
            <person name="Kleinschmidt T."/>
            <person name="Braunitzer G."/>
        </authorList>
    </citation>
    <scope>PROTEIN SEQUENCE</scope>
</reference>
<name>HBA_MACCA</name>